<keyword id="KW-0158">Chromosome</keyword>
<keyword id="KW-0963">Cytoplasm</keyword>
<keyword id="KW-0227">DNA damage</keyword>
<keyword id="KW-0234">DNA repair</keyword>
<keyword id="KW-0238">DNA-binding</keyword>
<keyword id="KW-0539">Nucleus</keyword>
<keyword id="KW-1185">Reference proteome</keyword>
<keyword id="KW-0779">Telomere</keyword>
<keyword id="KW-0832">Ubl conjugation</keyword>
<keyword id="KW-0833">Ubl conjugation pathway</keyword>
<accession>Q6BRB3</accession>
<reference key="1">
    <citation type="journal article" date="2004" name="Nature">
        <title>Genome evolution in yeasts.</title>
        <authorList>
            <person name="Dujon B."/>
            <person name="Sherman D."/>
            <person name="Fischer G."/>
            <person name="Durrens P."/>
            <person name="Casaregola S."/>
            <person name="Lafontaine I."/>
            <person name="de Montigny J."/>
            <person name="Marck C."/>
            <person name="Neuveglise C."/>
            <person name="Talla E."/>
            <person name="Goffard N."/>
            <person name="Frangeul L."/>
            <person name="Aigle M."/>
            <person name="Anthouard V."/>
            <person name="Babour A."/>
            <person name="Barbe V."/>
            <person name="Barnay S."/>
            <person name="Blanchin S."/>
            <person name="Beckerich J.-M."/>
            <person name="Beyne E."/>
            <person name="Bleykasten C."/>
            <person name="Boisrame A."/>
            <person name="Boyer J."/>
            <person name="Cattolico L."/>
            <person name="Confanioleri F."/>
            <person name="de Daruvar A."/>
            <person name="Despons L."/>
            <person name="Fabre E."/>
            <person name="Fairhead C."/>
            <person name="Ferry-Dumazet H."/>
            <person name="Groppi A."/>
            <person name="Hantraye F."/>
            <person name="Hennequin C."/>
            <person name="Jauniaux N."/>
            <person name="Joyet P."/>
            <person name="Kachouri R."/>
            <person name="Kerrest A."/>
            <person name="Koszul R."/>
            <person name="Lemaire M."/>
            <person name="Lesur I."/>
            <person name="Ma L."/>
            <person name="Muller H."/>
            <person name="Nicaud J.-M."/>
            <person name="Nikolski M."/>
            <person name="Oztas S."/>
            <person name="Ozier-Kalogeropoulos O."/>
            <person name="Pellenz S."/>
            <person name="Potier S."/>
            <person name="Richard G.-F."/>
            <person name="Straub M.-L."/>
            <person name="Suleau A."/>
            <person name="Swennen D."/>
            <person name="Tekaia F."/>
            <person name="Wesolowski-Louvel M."/>
            <person name="Westhof E."/>
            <person name="Wirth B."/>
            <person name="Zeniou-Meyer M."/>
            <person name="Zivanovic Y."/>
            <person name="Bolotin-Fukuhara M."/>
            <person name="Thierry A."/>
            <person name="Bouchier C."/>
            <person name="Caudron B."/>
            <person name="Scarpelli C."/>
            <person name="Gaillardin C."/>
            <person name="Weissenbach J."/>
            <person name="Wincker P."/>
            <person name="Souciet J.-L."/>
        </authorList>
    </citation>
    <scope>NUCLEOTIDE SEQUENCE [LARGE SCALE GENOMIC DNA]</scope>
    <source>
        <strain>ATCC 36239 / CBS 767 / BCRC 21394 / JCM 1990 / NBRC 0083 / IGC 2968</strain>
    </source>
</reference>
<organism>
    <name type="scientific">Debaryomyces hansenii (strain ATCC 36239 / CBS 767 / BCRC 21394 / JCM 1990 / NBRC 0083 / IGC 2968)</name>
    <name type="common">Yeast</name>
    <name type="synonym">Torulaspora hansenii</name>
    <dbReference type="NCBI Taxonomy" id="284592"/>
    <lineage>
        <taxon>Eukaryota</taxon>
        <taxon>Fungi</taxon>
        <taxon>Dikarya</taxon>
        <taxon>Ascomycota</taxon>
        <taxon>Saccharomycotina</taxon>
        <taxon>Pichiomycetes</taxon>
        <taxon>Debaryomycetaceae</taxon>
        <taxon>Debaryomyces</taxon>
    </lineage>
</organism>
<comment type="function">
    <text evidence="1">Recruits the ubiquitination machinery to RNA polymerase II for polyubiquitination, removal and degradation, when the transcription-coupled repair (TCR) factor RAD26 fails to efficiently displace stalled RNA polymerase II. Also involved in telomere length regulation. Binds DNA.</text>
</comment>
<comment type="subunit">
    <text evidence="1">Homodimer; may form higher order oligomers. Interacts with the large RNA polymerase II subunit RPO21; the interaction is direct and serves to bridge RPO21 to the Elongin complex in a manner dependent on transcription stress. Interacts with RAD26.</text>
</comment>
<comment type="subcellular location">
    <subcellularLocation>
        <location evidence="1">Cytoplasm</location>
    </subcellularLocation>
    <subcellularLocation>
        <location evidence="1">Nucleus</location>
    </subcellularLocation>
    <subcellularLocation>
        <location evidence="1">Chromosome</location>
        <location evidence="1">Telomere</location>
    </subcellularLocation>
    <text evidence="1">During transcription stress, localizes to the nucleus following proteolytic cleavage by the proteasome.</text>
</comment>
<comment type="PTM">
    <text evidence="1">Ubiquitinated.</text>
</comment>
<comment type="PTM">
    <text evidence="1">Proteolytically cleaved by the proteasome in response to transcription stress; the resulting N-terminal form constitutes the activated nuclear form and the C-terminal portion is degraded.</text>
</comment>
<comment type="similarity">
    <text evidence="4">Belongs to the DEF1 family.</text>
</comment>
<dbReference type="EMBL" id="CR382136">
    <property type="protein sequence ID" value="CAG87431.2"/>
    <property type="molecule type" value="Genomic_DNA"/>
</dbReference>
<dbReference type="RefSeq" id="XP_459257.2">
    <property type="nucleotide sequence ID" value="XM_459257.1"/>
</dbReference>
<dbReference type="SMR" id="Q6BRB3"/>
<dbReference type="GeneID" id="2901630"/>
<dbReference type="KEGG" id="dha:DEHA2D17732g"/>
<dbReference type="VEuPathDB" id="FungiDB:DEHA2D17732g"/>
<dbReference type="eggNOG" id="ENOG502S359">
    <property type="taxonomic scope" value="Eukaryota"/>
</dbReference>
<dbReference type="HOGENOM" id="CLU_438800_0_0_1"/>
<dbReference type="InParanoid" id="Q6BRB3"/>
<dbReference type="OMA" id="MYQNQFP"/>
<dbReference type="OrthoDB" id="5396806at2759"/>
<dbReference type="Proteomes" id="UP000000599">
    <property type="component" value="Chromosome D"/>
</dbReference>
<dbReference type="GO" id="GO:0000781">
    <property type="term" value="C:chromosome, telomeric region"/>
    <property type="evidence" value="ECO:0007669"/>
    <property type="project" value="UniProtKB-SubCell"/>
</dbReference>
<dbReference type="GO" id="GO:0005737">
    <property type="term" value="C:cytoplasm"/>
    <property type="evidence" value="ECO:0007669"/>
    <property type="project" value="UniProtKB-SubCell"/>
</dbReference>
<dbReference type="GO" id="GO:0005634">
    <property type="term" value="C:nucleus"/>
    <property type="evidence" value="ECO:0007669"/>
    <property type="project" value="UniProtKB-SubCell"/>
</dbReference>
<dbReference type="GO" id="GO:0003677">
    <property type="term" value="F:DNA binding"/>
    <property type="evidence" value="ECO:0007669"/>
    <property type="project" value="UniProtKB-KW"/>
</dbReference>
<dbReference type="GO" id="GO:0043130">
    <property type="term" value="F:ubiquitin binding"/>
    <property type="evidence" value="ECO:0007669"/>
    <property type="project" value="InterPro"/>
</dbReference>
<dbReference type="GO" id="GO:0006281">
    <property type="term" value="P:DNA repair"/>
    <property type="evidence" value="ECO:0007669"/>
    <property type="project" value="UniProtKB-KW"/>
</dbReference>
<dbReference type="CDD" id="cd14368">
    <property type="entry name" value="CUE_DEF1_like"/>
    <property type="match status" value="1"/>
</dbReference>
<dbReference type="InterPro" id="IPR003892">
    <property type="entry name" value="CUE"/>
</dbReference>
<dbReference type="InterPro" id="IPR041803">
    <property type="entry name" value="DEF1_CUE"/>
</dbReference>
<dbReference type="Pfam" id="PF02845">
    <property type="entry name" value="CUE"/>
    <property type="match status" value="1"/>
</dbReference>
<dbReference type="PROSITE" id="PS51140">
    <property type="entry name" value="CUE"/>
    <property type="match status" value="1"/>
</dbReference>
<name>DEF1_DEBHA</name>
<sequence>MSTQRKAYKNHSKRFSNNSSSSSNNNSSSTELTSLLEMFPDWESDDLSSLLAEHNNILEVVIDLIVNNKVSKWEPIKKEAKNKKKEKENDEFVNVPNTNVTSNNTTHTSSADHGHKLNKYHKEAHPSNSKSKFSSKGPHNKKPNPKFNGKDSSPTAPTTSTSTSTSGATSVPSSNSWAAALSKDGVKVNNKSHKESDSQPETELEPEPEPEPVAQAGEEHEIIIEQTTTVIESTETPTSTTKPVLKEATVPQPKQGSWASAITPKPKSKPRTKQALSGSQEESFESKGQFEQAQEEPVEAIIIEETTTTIPAESISSEETIEQPAQVVLPTSSQPLSSVGVSFGSLSLGDEEKESQPEQTTEEISAPVGEQSQQQQQQRYGLYNNQNQNQNQNRYNQQIYQQQQQHAQQQHAQQQQQQQPQQSQQSQQPQQPQQPQQPQQPQQPQQPQQPQQQPQQPQQPQQQYNQSKQQQQQQQQQYDYYNQFQQSQYPQQGSQTLPGAQFGVYPGMDYSAYNQQAAAAVVSSPAASPAATANYAQYAQAASQPPSSGAQEGNVAAQSPITSQINPNTLQQQVPAAPFGYPYYNYYYNTPFYGNGAGLGAQGGFGNVAAAQGTPTSNSNVTPNSGVNSGFMGVGNTGASQYYGQPNQFGNRYPGYNSYPQPGQAQSAQSGNPSNNQSGSVPASQGEANDSSSASNQAGNPQSQIPQQSQQPQQPGIPQYGGYQQYPQYGGYQDNNQYRGWY</sequence>
<protein>
    <recommendedName>
        <fullName>RNA polymerase II degradation factor 1</fullName>
    </recommendedName>
</protein>
<evidence type="ECO:0000250" key="1">
    <source>
        <dbReference type="UniProtKB" id="P35732"/>
    </source>
</evidence>
<evidence type="ECO:0000255" key="2">
    <source>
        <dbReference type="PROSITE-ProRule" id="PRU00468"/>
    </source>
</evidence>
<evidence type="ECO:0000256" key="3">
    <source>
        <dbReference type="SAM" id="MobiDB-lite"/>
    </source>
</evidence>
<evidence type="ECO:0000305" key="4"/>
<gene>
    <name type="primary">DEF1</name>
    <name type="ordered locus">DEHA2D17732g</name>
</gene>
<proteinExistence type="inferred from homology"/>
<feature type="chain" id="PRO_0000405667" description="RNA polymerase II degradation factor 1">
    <location>
        <begin position="1"/>
        <end position="742"/>
    </location>
</feature>
<feature type="domain" description="CUE" evidence="2">
    <location>
        <begin position="27"/>
        <end position="70"/>
    </location>
</feature>
<feature type="region of interest" description="Disordered" evidence="3">
    <location>
        <begin position="1"/>
        <end position="30"/>
    </location>
</feature>
<feature type="region of interest" description="Disordered" evidence="3">
    <location>
        <begin position="79"/>
        <end position="494"/>
    </location>
</feature>
<feature type="region of interest" description="Disordered" evidence="3">
    <location>
        <begin position="642"/>
        <end position="742"/>
    </location>
</feature>
<feature type="compositionally biased region" description="Basic residues" evidence="3">
    <location>
        <begin position="1"/>
        <end position="14"/>
    </location>
</feature>
<feature type="compositionally biased region" description="Low complexity" evidence="3">
    <location>
        <begin position="16"/>
        <end position="29"/>
    </location>
</feature>
<feature type="compositionally biased region" description="Basic and acidic residues" evidence="3">
    <location>
        <begin position="79"/>
        <end position="90"/>
    </location>
</feature>
<feature type="compositionally biased region" description="Low complexity" evidence="3">
    <location>
        <begin position="93"/>
        <end position="109"/>
    </location>
</feature>
<feature type="compositionally biased region" description="Basic and acidic residues" evidence="3">
    <location>
        <begin position="110"/>
        <end position="125"/>
    </location>
</feature>
<feature type="compositionally biased region" description="Low complexity" evidence="3">
    <location>
        <begin position="152"/>
        <end position="176"/>
    </location>
</feature>
<feature type="compositionally biased region" description="Acidic residues" evidence="3">
    <location>
        <begin position="198"/>
        <end position="210"/>
    </location>
</feature>
<feature type="compositionally biased region" description="Low complexity" evidence="3">
    <location>
        <begin position="224"/>
        <end position="241"/>
    </location>
</feature>
<feature type="compositionally biased region" description="Low complexity" evidence="3">
    <location>
        <begin position="299"/>
        <end position="324"/>
    </location>
</feature>
<feature type="compositionally biased region" description="Low complexity" evidence="3">
    <location>
        <begin position="336"/>
        <end position="348"/>
    </location>
</feature>
<feature type="compositionally biased region" description="Low complexity" evidence="3">
    <location>
        <begin position="371"/>
        <end position="494"/>
    </location>
</feature>
<feature type="compositionally biased region" description="Low complexity" evidence="3">
    <location>
        <begin position="663"/>
        <end position="680"/>
    </location>
</feature>
<feature type="compositionally biased region" description="Polar residues" evidence="3">
    <location>
        <begin position="681"/>
        <end position="700"/>
    </location>
</feature>
<feature type="compositionally biased region" description="Low complexity" evidence="3">
    <location>
        <begin position="701"/>
        <end position="733"/>
    </location>
</feature>